<sequence>MPYKINRMKNSLEINETGGTLLVDERKRLRIGELYRYKFSVNKDVIKEQGLDVSHLFLRIKNEESALLRPLYLTGPYSFYIDVRPHNYNENRKFPGKEIIPFVENLKPDERFKVKILLNENSRVGDTSLYSWTIDIISQLAVTTIPKLEFSFRIGTTRKVVKKSNGLFKSIEGVSLEMWDTETLWDLPPKFPEKPVHLVIMTHGIFSNIGCDMLYMKDKIEEMTFPMDESINPNIIVRGFMGNVGKSGHGIHCLGVRVGKYVLETVDKLNKKYKVDRISFIGHSLGGPTQSMAVRYISIKRPDFFDAVKGVKPVNFITLASPFIGVIGDFPFYLSVPLDMGALGLTGRDLNLKYTPLTSKDGLYADDEVYPEHSKYILEILPQAPAKKVFESFKRRTIYANVMDDGIVPLRTAALLYLDWRSIHKVQKIRKKNKNSPTSSEFVSSDSPESSGASSPSNENGNNVGEIPAESPNKKATLQWTLPQAVIHGSKINKYKRGQTNEANSDSDNEQGVFLDGQKFEPPKEANTVLSALSVLTAAIPDQEYIKNPAVRKDEVIHDKLYHPEELPPPHYENRPIVKKLIYPNESVNRIQERIAREWQETMTWRKVLVQIQPDSHNNIVVRRRFVNLYGYVAVEHMVEHHFGSKVCSELAEDANEPKDEPNQSSQADRSNEYNEGEISKGAENAT</sequence>
<dbReference type="EC" id="3.1.-.-"/>
<dbReference type="EMBL" id="U33007">
    <property type="protein sequence ID" value="AAB64869.1"/>
    <property type="molecule type" value="Genomic_DNA"/>
</dbReference>
<dbReference type="EMBL" id="BK006938">
    <property type="protein sequence ID" value="DAA12280.1"/>
    <property type="molecule type" value="Genomic_DNA"/>
</dbReference>
<dbReference type="PIR" id="S69723">
    <property type="entry name" value="S69723"/>
</dbReference>
<dbReference type="RefSeq" id="NP_010732.1">
    <property type="nucleotide sequence ID" value="NM_001180752.1"/>
</dbReference>
<dbReference type="BioGRID" id="32499">
    <property type="interactions" value="40"/>
</dbReference>
<dbReference type="DIP" id="DIP-4736N"/>
<dbReference type="FunCoup" id="Q04093">
    <property type="interactions" value="28"/>
</dbReference>
<dbReference type="MINT" id="Q04093"/>
<dbReference type="STRING" id="4932.YDR444W"/>
<dbReference type="ESTHER" id="yeast-YDR444W">
    <property type="family name" value="Duf_676"/>
</dbReference>
<dbReference type="GlyGen" id="Q04093">
    <property type="glycosylation" value="1 site"/>
</dbReference>
<dbReference type="iPTMnet" id="Q04093"/>
<dbReference type="PaxDb" id="4932-YDR444W"/>
<dbReference type="PeptideAtlas" id="Q04093"/>
<dbReference type="EnsemblFungi" id="YDR444W_mRNA">
    <property type="protein sequence ID" value="YDR444W"/>
    <property type="gene ID" value="YDR444W"/>
</dbReference>
<dbReference type="GeneID" id="852054"/>
<dbReference type="KEGG" id="sce:YDR444W"/>
<dbReference type="AGR" id="SGD:S000002852"/>
<dbReference type="SGD" id="S000002852">
    <property type="gene designation" value="YDR444W"/>
</dbReference>
<dbReference type="VEuPathDB" id="FungiDB:YDR444W"/>
<dbReference type="eggNOG" id="KOG4372">
    <property type="taxonomic scope" value="Eukaryota"/>
</dbReference>
<dbReference type="HOGENOM" id="CLU_007367_1_0_1"/>
<dbReference type="InParanoid" id="Q04093"/>
<dbReference type="OMA" id="FSNIGCD"/>
<dbReference type="OrthoDB" id="5368485at2759"/>
<dbReference type="BioCyc" id="YEAST:G3O-29976-MONOMER"/>
<dbReference type="BioGRID-ORCS" id="852054">
    <property type="hits" value="0 hits in 10 CRISPR screens"/>
</dbReference>
<dbReference type="PRO" id="PR:Q04093"/>
<dbReference type="Proteomes" id="UP000002311">
    <property type="component" value="Chromosome IV"/>
</dbReference>
<dbReference type="RNAct" id="Q04093">
    <property type="molecule type" value="protein"/>
</dbReference>
<dbReference type="GO" id="GO:0005737">
    <property type="term" value="C:cytoplasm"/>
    <property type="evidence" value="ECO:0007005"/>
    <property type="project" value="SGD"/>
</dbReference>
<dbReference type="GO" id="GO:0047372">
    <property type="term" value="F:monoacylglycerol lipase activity"/>
    <property type="evidence" value="ECO:0000318"/>
    <property type="project" value="GO_Central"/>
</dbReference>
<dbReference type="GO" id="GO:0016042">
    <property type="term" value="P:lipid catabolic process"/>
    <property type="evidence" value="ECO:0007669"/>
    <property type="project" value="UniProtKB-KW"/>
</dbReference>
<dbReference type="GO" id="GO:0006629">
    <property type="term" value="P:lipid metabolic process"/>
    <property type="evidence" value="ECO:0000318"/>
    <property type="project" value="GO_Central"/>
</dbReference>
<dbReference type="Gene3D" id="3.40.50.1820">
    <property type="entry name" value="alpha/beta hydrolase"/>
    <property type="match status" value="1"/>
</dbReference>
<dbReference type="InterPro" id="IPR029058">
    <property type="entry name" value="AB_hydrolase_fold"/>
</dbReference>
<dbReference type="InterPro" id="IPR007751">
    <property type="entry name" value="DUF676_lipase-like"/>
</dbReference>
<dbReference type="InterPro" id="IPR044294">
    <property type="entry name" value="Lipase-like"/>
</dbReference>
<dbReference type="InterPro" id="IPR016445">
    <property type="entry name" value="Rog1_fam"/>
</dbReference>
<dbReference type="PANTHER" id="PTHR12482">
    <property type="entry name" value="LIPASE ROG1-RELATED-RELATED"/>
    <property type="match status" value="1"/>
</dbReference>
<dbReference type="PANTHER" id="PTHR12482:SF20">
    <property type="entry name" value="LIPASE YDR444W-RELATED"/>
    <property type="match status" value="1"/>
</dbReference>
<dbReference type="Pfam" id="PF05057">
    <property type="entry name" value="DUF676"/>
    <property type="match status" value="1"/>
</dbReference>
<dbReference type="PIRSF" id="PIRSF005412">
    <property type="entry name" value="UCP005412_abhydr"/>
    <property type="match status" value="1"/>
</dbReference>
<dbReference type="SUPFAM" id="SSF53474">
    <property type="entry name" value="alpha/beta-Hydrolases"/>
    <property type="match status" value="1"/>
</dbReference>
<dbReference type="PROSITE" id="PS00120">
    <property type="entry name" value="LIPASE_SER"/>
    <property type="match status" value="1"/>
</dbReference>
<comment type="subcellular location">
    <subcellularLocation>
        <location evidence="3">Cytoplasm</location>
    </subcellularLocation>
</comment>
<comment type="miscellaneous">
    <text evidence="4">Present with 2070 molecules/cell in log phase SD medium.</text>
</comment>
<comment type="similarity">
    <text evidence="5">Belongs to the putative lipase ROG1 family.</text>
</comment>
<protein>
    <recommendedName>
        <fullName>Putative lipase YDR444W</fullName>
        <ecNumber>3.1.-.-</ecNumber>
    </recommendedName>
</protein>
<feature type="chain" id="PRO_0000253824" description="Putative lipase YDR444W">
    <location>
        <begin position="1"/>
        <end position="687"/>
    </location>
</feature>
<feature type="region of interest" description="Disordered" evidence="2">
    <location>
        <begin position="429"/>
        <end position="472"/>
    </location>
</feature>
<feature type="region of interest" description="Disordered" evidence="2">
    <location>
        <begin position="491"/>
        <end position="513"/>
    </location>
</feature>
<feature type="region of interest" description="Disordered" evidence="2">
    <location>
        <begin position="650"/>
        <end position="687"/>
    </location>
</feature>
<feature type="compositionally biased region" description="Low complexity" evidence="2">
    <location>
        <begin position="436"/>
        <end position="463"/>
    </location>
</feature>
<feature type="compositionally biased region" description="Basic and acidic residues" evidence="2">
    <location>
        <begin position="670"/>
        <end position="681"/>
    </location>
</feature>
<feature type="active site" description="Charge relay system" evidence="1">
    <location>
        <position position="284"/>
    </location>
</feature>
<keyword id="KW-0963">Cytoplasm</keyword>
<keyword id="KW-0378">Hydrolase</keyword>
<keyword id="KW-0442">Lipid degradation</keyword>
<keyword id="KW-0443">Lipid metabolism</keyword>
<keyword id="KW-1185">Reference proteome</keyword>
<reference key="1">
    <citation type="journal article" date="1997" name="Nature">
        <title>The nucleotide sequence of Saccharomyces cerevisiae chromosome IV.</title>
        <authorList>
            <person name="Jacq C."/>
            <person name="Alt-Moerbe J."/>
            <person name="Andre B."/>
            <person name="Arnold W."/>
            <person name="Bahr A."/>
            <person name="Ballesta J.P.G."/>
            <person name="Bargues M."/>
            <person name="Baron L."/>
            <person name="Becker A."/>
            <person name="Biteau N."/>
            <person name="Bloecker H."/>
            <person name="Blugeon C."/>
            <person name="Boskovic J."/>
            <person name="Brandt P."/>
            <person name="Brueckner M."/>
            <person name="Buitrago M.J."/>
            <person name="Coster F."/>
            <person name="Delaveau T."/>
            <person name="del Rey F."/>
            <person name="Dujon B."/>
            <person name="Eide L.G."/>
            <person name="Garcia-Cantalejo J.M."/>
            <person name="Goffeau A."/>
            <person name="Gomez-Peris A."/>
            <person name="Granotier C."/>
            <person name="Hanemann V."/>
            <person name="Hankeln T."/>
            <person name="Hoheisel J.D."/>
            <person name="Jaeger W."/>
            <person name="Jimenez A."/>
            <person name="Jonniaux J.-L."/>
            <person name="Kraemer C."/>
            <person name="Kuester H."/>
            <person name="Laamanen P."/>
            <person name="Legros Y."/>
            <person name="Louis E.J."/>
            <person name="Moeller-Rieker S."/>
            <person name="Monnet A."/>
            <person name="Moro M."/>
            <person name="Mueller-Auer S."/>
            <person name="Nussbaumer B."/>
            <person name="Paricio N."/>
            <person name="Paulin L."/>
            <person name="Perea J."/>
            <person name="Perez-Alonso M."/>
            <person name="Perez-Ortin J.E."/>
            <person name="Pohl T.M."/>
            <person name="Prydz H."/>
            <person name="Purnelle B."/>
            <person name="Rasmussen S.W."/>
            <person name="Remacha M.A."/>
            <person name="Revuelta J.L."/>
            <person name="Rieger M."/>
            <person name="Salom D."/>
            <person name="Saluz H.P."/>
            <person name="Saiz J.E."/>
            <person name="Saren A.-M."/>
            <person name="Schaefer M."/>
            <person name="Scharfe M."/>
            <person name="Schmidt E.R."/>
            <person name="Schneider C."/>
            <person name="Scholler P."/>
            <person name="Schwarz S."/>
            <person name="Soler-Mira A."/>
            <person name="Urrestarazu L.A."/>
            <person name="Verhasselt P."/>
            <person name="Vissers S."/>
            <person name="Voet M."/>
            <person name="Volckaert G."/>
            <person name="Wagner G."/>
            <person name="Wambutt R."/>
            <person name="Wedler E."/>
            <person name="Wedler H."/>
            <person name="Woelfl S."/>
            <person name="Harris D.E."/>
            <person name="Bowman S."/>
            <person name="Brown D."/>
            <person name="Churcher C.M."/>
            <person name="Connor R."/>
            <person name="Dedman K."/>
            <person name="Gentles S."/>
            <person name="Hamlin N."/>
            <person name="Hunt S."/>
            <person name="Jones L."/>
            <person name="McDonald S."/>
            <person name="Murphy L.D."/>
            <person name="Niblett D."/>
            <person name="Odell C."/>
            <person name="Oliver K."/>
            <person name="Rajandream M.A."/>
            <person name="Richards C."/>
            <person name="Shore L."/>
            <person name="Walsh S.V."/>
            <person name="Barrell B.G."/>
            <person name="Dietrich F.S."/>
            <person name="Mulligan J.T."/>
            <person name="Allen E."/>
            <person name="Araujo R."/>
            <person name="Aviles E."/>
            <person name="Berno A."/>
            <person name="Carpenter J."/>
            <person name="Chen E."/>
            <person name="Cherry J.M."/>
            <person name="Chung E."/>
            <person name="Duncan M."/>
            <person name="Hunicke-Smith S."/>
            <person name="Hyman R.W."/>
            <person name="Komp C."/>
            <person name="Lashkari D."/>
            <person name="Lew H."/>
            <person name="Lin D."/>
            <person name="Mosedale D."/>
            <person name="Nakahara K."/>
            <person name="Namath A."/>
            <person name="Oefner P."/>
            <person name="Oh C."/>
            <person name="Petel F.X."/>
            <person name="Roberts D."/>
            <person name="Schramm S."/>
            <person name="Schroeder M."/>
            <person name="Shogren T."/>
            <person name="Shroff N."/>
            <person name="Winant A."/>
            <person name="Yelton M.A."/>
            <person name="Botstein D."/>
            <person name="Davis R.W."/>
            <person name="Johnston M."/>
            <person name="Andrews S."/>
            <person name="Brinkman R."/>
            <person name="Cooper J."/>
            <person name="Ding H."/>
            <person name="Du Z."/>
            <person name="Favello A."/>
            <person name="Fulton L."/>
            <person name="Gattung S."/>
            <person name="Greco T."/>
            <person name="Hallsworth K."/>
            <person name="Hawkins J."/>
            <person name="Hillier L.W."/>
            <person name="Jier M."/>
            <person name="Johnson D."/>
            <person name="Johnston L."/>
            <person name="Kirsten J."/>
            <person name="Kucaba T."/>
            <person name="Langston Y."/>
            <person name="Latreille P."/>
            <person name="Le T."/>
            <person name="Mardis E."/>
            <person name="Menezes S."/>
            <person name="Miller N."/>
            <person name="Nhan M."/>
            <person name="Pauley A."/>
            <person name="Peluso D."/>
            <person name="Rifkin L."/>
            <person name="Riles L."/>
            <person name="Taich A."/>
            <person name="Trevaskis E."/>
            <person name="Vignati D."/>
            <person name="Wilcox L."/>
            <person name="Wohldman P."/>
            <person name="Vaudin M."/>
            <person name="Wilson R."/>
            <person name="Waterston R."/>
            <person name="Albermann K."/>
            <person name="Hani J."/>
            <person name="Heumann K."/>
            <person name="Kleine K."/>
            <person name="Mewes H.-W."/>
            <person name="Zollner A."/>
            <person name="Zaccaria P."/>
        </authorList>
    </citation>
    <scope>NUCLEOTIDE SEQUENCE [LARGE SCALE GENOMIC DNA]</scope>
    <source>
        <strain>ATCC 204508 / S288c</strain>
    </source>
</reference>
<reference key="2">
    <citation type="journal article" date="2014" name="G3 (Bethesda)">
        <title>The reference genome sequence of Saccharomyces cerevisiae: Then and now.</title>
        <authorList>
            <person name="Engel S.R."/>
            <person name="Dietrich F.S."/>
            <person name="Fisk D.G."/>
            <person name="Binkley G."/>
            <person name="Balakrishnan R."/>
            <person name="Costanzo M.C."/>
            <person name="Dwight S.S."/>
            <person name="Hitz B.C."/>
            <person name="Karra K."/>
            <person name="Nash R.S."/>
            <person name="Weng S."/>
            <person name="Wong E.D."/>
            <person name="Lloyd P."/>
            <person name="Skrzypek M.S."/>
            <person name="Miyasato S.R."/>
            <person name="Simison M."/>
            <person name="Cherry J.M."/>
        </authorList>
    </citation>
    <scope>GENOME REANNOTATION</scope>
    <source>
        <strain>ATCC 204508 / S288c</strain>
    </source>
</reference>
<reference key="3">
    <citation type="journal article" date="2003" name="Nature">
        <title>Global analysis of protein localization in budding yeast.</title>
        <authorList>
            <person name="Huh W.-K."/>
            <person name="Falvo J.V."/>
            <person name="Gerke L.C."/>
            <person name="Carroll A.S."/>
            <person name="Howson R.W."/>
            <person name="Weissman J.S."/>
            <person name="O'Shea E.K."/>
        </authorList>
    </citation>
    <scope>SUBCELLULAR LOCATION [LARGE SCALE ANALYSIS]</scope>
</reference>
<reference key="4">
    <citation type="journal article" date="2003" name="Nature">
        <title>Global analysis of protein expression in yeast.</title>
        <authorList>
            <person name="Ghaemmaghami S."/>
            <person name="Huh W.-K."/>
            <person name="Bower K."/>
            <person name="Howson R.W."/>
            <person name="Belle A."/>
            <person name="Dephoure N."/>
            <person name="O'Shea E.K."/>
            <person name="Weissman J.S."/>
        </authorList>
    </citation>
    <scope>LEVEL OF PROTEIN EXPRESSION [LARGE SCALE ANALYSIS]</scope>
</reference>
<reference key="5">
    <citation type="journal article" date="2008" name="Mol. Cell. Proteomics">
        <title>A multidimensional chromatography technology for in-depth phosphoproteome analysis.</title>
        <authorList>
            <person name="Albuquerque C.P."/>
            <person name="Smolka M.B."/>
            <person name="Payne S.H."/>
            <person name="Bafna V."/>
            <person name="Eng J."/>
            <person name="Zhou H."/>
        </authorList>
    </citation>
    <scope>IDENTIFICATION BY MASS SPECTROMETRY [LARGE SCALE ANALYSIS]</scope>
</reference>
<name>YD444_YEAST</name>
<gene>
    <name type="ordered locus">YDR444W</name>
</gene>
<proteinExistence type="evidence at protein level"/>
<evidence type="ECO:0000255" key="1">
    <source>
        <dbReference type="PROSITE-ProRule" id="PRU10037"/>
    </source>
</evidence>
<evidence type="ECO:0000256" key="2">
    <source>
        <dbReference type="SAM" id="MobiDB-lite"/>
    </source>
</evidence>
<evidence type="ECO:0000269" key="3">
    <source>
    </source>
</evidence>
<evidence type="ECO:0000269" key="4">
    <source>
    </source>
</evidence>
<evidence type="ECO:0000305" key="5"/>
<accession>Q04093</accession>
<accession>D6VT70</accession>
<organism>
    <name type="scientific">Saccharomyces cerevisiae (strain ATCC 204508 / S288c)</name>
    <name type="common">Baker's yeast</name>
    <dbReference type="NCBI Taxonomy" id="559292"/>
    <lineage>
        <taxon>Eukaryota</taxon>
        <taxon>Fungi</taxon>
        <taxon>Dikarya</taxon>
        <taxon>Ascomycota</taxon>
        <taxon>Saccharomycotina</taxon>
        <taxon>Saccharomycetes</taxon>
        <taxon>Saccharomycetales</taxon>
        <taxon>Saccharomycetaceae</taxon>
        <taxon>Saccharomyces</taxon>
    </lineage>
</organism>